<evidence type="ECO:0000255" key="1">
    <source>
        <dbReference type="HAMAP-Rule" id="MF_01367"/>
    </source>
</evidence>
<evidence type="ECO:0000305" key="2"/>
<accession>Q73PM2</accession>
<name>RL14_TREDE</name>
<reference key="1">
    <citation type="journal article" date="2004" name="Proc. Natl. Acad. Sci. U.S.A.">
        <title>Comparison of the genome of the oral pathogen Treponema denticola with other spirochete genomes.</title>
        <authorList>
            <person name="Seshadri R."/>
            <person name="Myers G.S.A."/>
            <person name="Tettelin H."/>
            <person name="Eisen J.A."/>
            <person name="Heidelberg J.F."/>
            <person name="Dodson R.J."/>
            <person name="Davidsen T.M."/>
            <person name="DeBoy R.T."/>
            <person name="Fouts D.E."/>
            <person name="Haft D.H."/>
            <person name="Selengut J."/>
            <person name="Ren Q."/>
            <person name="Brinkac L.M."/>
            <person name="Madupu R."/>
            <person name="Kolonay J.F."/>
            <person name="Durkin S.A."/>
            <person name="Daugherty S.C."/>
            <person name="Shetty J."/>
            <person name="Shvartsbeyn A."/>
            <person name="Gebregeorgis E."/>
            <person name="Geer K."/>
            <person name="Tsegaye G."/>
            <person name="Malek J.A."/>
            <person name="Ayodeji B."/>
            <person name="Shatsman S."/>
            <person name="McLeod M.P."/>
            <person name="Smajs D."/>
            <person name="Howell J.K."/>
            <person name="Pal S."/>
            <person name="Amin A."/>
            <person name="Vashisth P."/>
            <person name="McNeill T.Z."/>
            <person name="Xiang Q."/>
            <person name="Sodergren E."/>
            <person name="Baca E."/>
            <person name="Weinstock G.M."/>
            <person name="Norris S.J."/>
            <person name="Fraser C.M."/>
            <person name="Paulsen I.T."/>
        </authorList>
    </citation>
    <scope>NUCLEOTIDE SEQUENCE [LARGE SCALE GENOMIC DNA]</scope>
    <source>
        <strain>ATCC 35405 / DSM 14222 / CIP 103919 / JCM 8153 / KCTC 15104</strain>
    </source>
</reference>
<feature type="chain" id="PRO_0000266578" description="Large ribosomal subunit protein uL14">
    <location>
        <begin position="1"/>
        <end position="122"/>
    </location>
</feature>
<protein>
    <recommendedName>
        <fullName evidence="1">Large ribosomal subunit protein uL14</fullName>
    </recommendedName>
    <alternativeName>
        <fullName evidence="2">50S ribosomal protein L14</fullName>
    </alternativeName>
</protein>
<gene>
    <name evidence="1" type="primary">rplN</name>
    <name type="ordered locus">TDE_0777</name>
</gene>
<sequence>MIQVETRLNVADNSGAKLVECIKVIGGSKRRYAGIGDIIVVAVKEALPTSVIKKGTVEKAVIVRVSKEYRRPDGTYIRFDDNACVIVDDNKNPKGKRIFGPVARELRDHDFMKIVSLAPEVL</sequence>
<organism>
    <name type="scientific">Treponema denticola (strain ATCC 35405 / DSM 14222 / CIP 103919 / JCM 8153 / KCTC 15104)</name>
    <dbReference type="NCBI Taxonomy" id="243275"/>
    <lineage>
        <taxon>Bacteria</taxon>
        <taxon>Pseudomonadati</taxon>
        <taxon>Spirochaetota</taxon>
        <taxon>Spirochaetia</taxon>
        <taxon>Spirochaetales</taxon>
        <taxon>Treponemataceae</taxon>
        <taxon>Treponema</taxon>
    </lineage>
</organism>
<dbReference type="EMBL" id="AE017226">
    <property type="protein sequence ID" value="AAS11268.1"/>
    <property type="molecule type" value="Genomic_DNA"/>
</dbReference>
<dbReference type="RefSeq" id="NP_971387.1">
    <property type="nucleotide sequence ID" value="NC_002967.9"/>
</dbReference>
<dbReference type="RefSeq" id="WP_002670011.1">
    <property type="nucleotide sequence ID" value="NC_002967.9"/>
</dbReference>
<dbReference type="SMR" id="Q73PM2"/>
<dbReference type="STRING" id="243275.TDE_0777"/>
<dbReference type="PaxDb" id="243275-TDE_0777"/>
<dbReference type="GeneID" id="2740655"/>
<dbReference type="KEGG" id="tde:TDE_0777"/>
<dbReference type="PATRIC" id="fig|243275.7.peg.750"/>
<dbReference type="eggNOG" id="COG0093">
    <property type="taxonomic scope" value="Bacteria"/>
</dbReference>
<dbReference type="HOGENOM" id="CLU_095071_2_1_12"/>
<dbReference type="OrthoDB" id="9806379at2"/>
<dbReference type="Proteomes" id="UP000008212">
    <property type="component" value="Chromosome"/>
</dbReference>
<dbReference type="GO" id="GO:0022625">
    <property type="term" value="C:cytosolic large ribosomal subunit"/>
    <property type="evidence" value="ECO:0007669"/>
    <property type="project" value="TreeGrafter"/>
</dbReference>
<dbReference type="GO" id="GO:0070180">
    <property type="term" value="F:large ribosomal subunit rRNA binding"/>
    <property type="evidence" value="ECO:0007669"/>
    <property type="project" value="TreeGrafter"/>
</dbReference>
<dbReference type="GO" id="GO:0003735">
    <property type="term" value="F:structural constituent of ribosome"/>
    <property type="evidence" value="ECO:0007669"/>
    <property type="project" value="InterPro"/>
</dbReference>
<dbReference type="GO" id="GO:0006412">
    <property type="term" value="P:translation"/>
    <property type="evidence" value="ECO:0007669"/>
    <property type="project" value="UniProtKB-UniRule"/>
</dbReference>
<dbReference type="CDD" id="cd00337">
    <property type="entry name" value="Ribosomal_uL14"/>
    <property type="match status" value="1"/>
</dbReference>
<dbReference type="FunFam" id="2.40.150.20:FF:000001">
    <property type="entry name" value="50S ribosomal protein L14"/>
    <property type="match status" value="1"/>
</dbReference>
<dbReference type="Gene3D" id="2.40.150.20">
    <property type="entry name" value="Ribosomal protein L14"/>
    <property type="match status" value="1"/>
</dbReference>
<dbReference type="HAMAP" id="MF_01367">
    <property type="entry name" value="Ribosomal_uL14"/>
    <property type="match status" value="1"/>
</dbReference>
<dbReference type="InterPro" id="IPR000218">
    <property type="entry name" value="Ribosomal_uL14"/>
</dbReference>
<dbReference type="InterPro" id="IPR005745">
    <property type="entry name" value="Ribosomal_uL14_bac-type"/>
</dbReference>
<dbReference type="InterPro" id="IPR019972">
    <property type="entry name" value="Ribosomal_uL14_CS"/>
</dbReference>
<dbReference type="InterPro" id="IPR036853">
    <property type="entry name" value="Ribosomal_uL14_sf"/>
</dbReference>
<dbReference type="NCBIfam" id="TIGR01067">
    <property type="entry name" value="rplN_bact"/>
    <property type="match status" value="1"/>
</dbReference>
<dbReference type="PANTHER" id="PTHR11761">
    <property type="entry name" value="50S/60S RIBOSOMAL PROTEIN L14/L23"/>
    <property type="match status" value="1"/>
</dbReference>
<dbReference type="PANTHER" id="PTHR11761:SF3">
    <property type="entry name" value="LARGE RIBOSOMAL SUBUNIT PROTEIN UL14M"/>
    <property type="match status" value="1"/>
</dbReference>
<dbReference type="Pfam" id="PF00238">
    <property type="entry name" value="Ribosomal_L14"/>
    <property type="match status" value="1"/>
</dbReference>
<dbReference type="SMART" id="SM01374">
    <property type="entry name" value="Ribosomal_L14"/>
    <property type="match status" value="1"/>
</dbReference>
<dbReference type="SUPFAM" id="SSF50193">
    <property type="entry name" value="Ribosomal protein L14"/>
    <property type="match status" value="1"/>
</dbReference>
<dbReference type="PROSITE" id="PS00049">
    <property type="entry name" value="RIBOSOMAL_L14"/>
    <property type="match status" value="1"/>
</dbReference>
<proteinExistence type="inferred from homology"/>
<keyword id="KW-1185">Reference proteome</keyword>
<keyword id="KW-0687">Ribonucleoprotein</keyword>
<keyword id="KW-0689">Ribosomal protein</keyword>
<keyword id="KW-0694">RNA-binding</keyword>
<keyword id="KW-0699">rRNA-binding</keyword>
<comment type="function">
    <text evidence="1">Binds to 23S rRNA. Forms part of two intersubunit bridges in the 70S ribosome.</text>
</comment>
<comment type="subunit">
    <text evidence="1">Part of the 50S ribosomal subunit. Forms a cluster with proteins L3 and L19. In the 70S ribosome, L14 and L19 interact and together make contacts with the 16S rRNA in bridges B5 and B8.</text>
</comment>
<comment type="similarity">
    <text evidence="1">Belongs to the universal ribosomal protein uL14 family.</text>
</comment>